<feature type="chain" id="PRO_0000317275" description="Smoothelin-like protein 1">
    <location>
        <begin position="1"/>
        <end position="494"/>
    </location>
</feature>
<feature type="domain" description="Calponin-homology (CH)" evidence="4">
    <location>
        <begin position="378"/>
        <end position="484"/>
    </location>
</feature>
<feature type="region of interest" description="Disordered" evidence="5">
    <location>
        <begin position="1"/>
        <end position="348"/>
    </location>
</feature>
<feature type="region of interest" description="Calmodulin-binding" evidence="1">
    <location>
        <begin position="476"/>
        <end position="494"/>
    </location>
</feature>
<feature type="coiled-coil region" evidence="3">
    <location>
        <begin position="123"/>
        <end position="145"/>
    </location>
</feature>
<feature type="compositionally biased region" description="Basic and acidic residues" evidence="5">
    <location>
        <begin position="1"/>
        <end position="10"/>
    </location>
</feature>
<feature type="compositionally biased region" description="Basic and acidic residues" evidence="5">
    <location>
        <begin position="74"/>
        <end position="104"/>
    </location>
</feature>
<feature type="compositionally biased region" description="Basic and acidic residues" evidence="5">
    <location>
        <begin position="112"/>
        <end position="166"/>
    </location>
</feature>
<feature type="compositionally biased region" description="Basic and acidic residues" evidence="5">
    <location>
        <begin position="179"/>
        <end position="232"/>
    </location>
</feature>
<feature type="compositionally biased region" description="Acidic residues" evidence="5">
    <location>
        <begin position="233"/>
        <end position="255"/>
    </location>
</feature>
<feature type="compositionally biased region" description="Low complexity" evidence="5">
    <location>
        <begin position="269"/>
        <end position="279"/>
    </location>
</feature>
<feature type="compositionally biased region" description="Low complexity" evidence="5">
    <location>
        <begin position="302"/>
        <end position="314"/>
    </location>
</feature>
<feature type="compositionally biased region" description="Basic and acidic residues" evidence="5">
    <location>
        <begin position="324"/>
        <end position="335"/>
    </location>
</feature>
<feature type="modified residue" description="Phosphoserine" evidence="2">
    <location>
        <position position="336"/>
    </location>
</feature>
<organism>
    <name type="scientific">Homo sapiens</name>
    <name type="common">Human</name>
    <dbReference type="NCBI Taxonomy" id="9606"/>
    <lineage>
        <taxon>Eukaryota</taxon>
        <taxon>Metazoa</taxon>
        <taxon>Chordata</taxon>
        <taxon>Craniata</taxon>
        <taxon>Vertebrata</taxon>
        <taxon>Euteleostomi</taxon>
        <taxon>Mammalia</taxon>
        <taxon>Eutheria</taxon>
        <taxon>Euarchontoglires</taxon>
        <taxon>Primates</taxon>
        <taxon>Haplorrhini</taxon>
        <taxon>Catarrhini</taxon>
        <taxon>Hominidae</taxon>
        <taxon>Homo</taxon>
    </lineage>
</organism>
<keyword id="KW-0112">Calmodulin-binding</keyword>
<keyword id="KW-0175">Coiled coil</keyword>
<keyword id="KW-0963">Cytoplasm</keyword>
<keyword id="KW-0514">Muscle protein</keyword>
<keyword id="KW-0539">Nucleus</keyword>
<keyword id="KW-0597">Phosphoprotein</keyword>
<keyword id="KW-1267">Proteomics identification</keyword>
<keyword id="KW-1185">Reference proteome</keyword>
<sequence length="494" mass="52987">MEQKEGKLSEDGTTVSPAADNPEMSGGGAPAEETKGTAGKAINEGPPTESGKQEKAPAEDGMSAELQGEANGLDEVKVESQREAGGKEDAEAELKKEDGEKEETTVGSQEMTGRKEETKSEPKEAEEKESTLASEKQKAEEKEAKPESGQKADANDRDKPEPKATVEEEDAKTASQEETGQRKECSTEPKEKATDEEAKAESQKAVVEDEAKAEPKEPDGKEEAKHGAKEEADAKEEAEDAEEAEPGSPSEEQEQDVEKEPEGGAGVIPSSPEEWPESPTGEGHNLSTDGLGPDCVASGQTSPSASESSPSDVPQSPPESPSSGEKKEKAPERRVSAPARPRGPRAQNRKAIVDKFGGAASGPTALFRNTKAAGAAIGGVKNMLLEWCRAMTKKYEHVDIQNFSSSWSSGMAFCALIHKFFPDAFDYAELDPAKRRHNFTLAFSTAEKLADCAQLLDVDDMVRLAVPDSKCVYTYIQELYRSLVQKGLVKTKKK</sequence>
<protein>
    <recommendedName>
        <fullName>Smoothelin-like protein 1</fullName>
    </recommendedName>
</protein>
<dbReference type="EMBL" id="AP002893">
    <property type="status" value="NOT_ANNOTATED_CDS"/>
    <property type="molecule type" value="Genomic_DNA"/>
</dbReference>
<dbReference type="CCDS" id="CCDS44599.2"/>
<dbReference type="RefSeq" id="NP_001099035.2">
    <property type="nucleotide sequence ID" value="NM_001105565.3"/>
</dbReference>
<dbReference type="RefSeq" id="XP_005273876.1">
    <property type="nucleotide sequence ID" value="XM_005273819.3"/>
</dbReference>
<dbReference type="SMR" id="A8MU46"/>
<dbReference type="FunCoup" id="A8MU46">
    <property type="interactions" value="42"/>
</dbReference>
<dbReference type="IntAct" id="A8MU46">
    <property type="interactions" value="4"/>
</dbReference>
<dbReference type="STRING" id="9606.ENSP00000432651"/>
<dbReference type="iPTMnet" id="A8MU46"/>
<dbReference type="PhosphoSitePlus" id="A8MU46"/>
<dbReference type="BioMuta" id="SMTNL1"/>
<dbReference type="MassIVE" id="A8MU46"/>
<dbReference type="PaxDb" id="9606-ENSP00000432651"/>
<dbReference type="PeptideAtlas" id="A8MU46"/>
<dbReference type="ProteomicsDB" id="2081"/>
<dbReference type="ProteomicsDB" id="22736"/>
<dbReference type="Antibodypedia" id="48478">
    <property type="antibodies" value="65 antibodies from 14 providers"/>
</dbReference>
<dbReference type="DNASU" id="219537"/>
<dbReference type="Ensembl" id="ENST00000527972.6">
    <property type="protein sequence ID" value="ENSP00000432651.1"/>
    <property type="gene ID" value="ENSG00000214872.9"/>
</dbReference>
<dbReference type="GeneID" id="219537"/>
<dbReference type="KEGG" id="hsa:219537"/>
<dbReference type="MANE-Select" id="ENST00000527972.6">
    <property type="protein sequence ID" value="ENSP00000432651.1"/>
    <property type="RefSeq nucleotide sequence ID" value="NM_001105565.3"/>
    <property type="RefSeq protein sequence ID" value="NP_001099035.2"/>
</dbReference>
<dbReference type="UCSC" id="uc058bmq.1">
    <property type="organism name" value="human"/>
</dbReference>
<dbReference type="AGR" id="HGNC:32394"/>
<dbReference type="CTD" id="219537"/>
<dbReference type="DisGeNET" id="219537"/>
<dbReference type="GeneCards" id="SMTNL1"/>
<dbReference type="HGNC" id="HGNC:32394">
    <property type="gene designation" value="SMTNL1"/>
</dbReference>
<dbReference type="HPA" id="ENSG00000214872">
    <property type="expression patterns" value="Group enriched (skeletal muscle, tongue)"/>
</dbReference>
<dbReference type="MIM" id="613664">
    <property type="type" value="gene"/>
</dbReference>
<dbReference type="neXtProt" id="NX_A8MU46"/>
<dbReference type="OpenTargets" id="ENSG00000214872"/>
<dbReference type="VEuPathDB" id="HostDB:ENSG00000214872"/>
<dbReference type="eggNOG" id="KOG1808">
    <property type="taxonomic scope" value="Eukaryota"/>
</dbReference>
<dbReference type="eggNOG" id="KOG4678">
    <property type="taxonomic scope" value="Eukaryota"/>
</dbReference>
<dbReference type="GeneTree" id="ENSGT00940000162276"/>
<dbReference type="HOGENOM" id="CLU_040651_5_1_1"/>
<dbReference type="InParanoid" id="A8MU46"/>
<dbReference type="OMA" id="EWPESPS"/>
<dbReference type="OrthoDB" id="21607at2759"/>
<dbReference type="PAN-GO" id="A8MU46">
    <property type="GO annotations" value="8 GO annotations based on evolutionary models"/>
</dbReference>
<dbReference type="PhylomeDB" id="A8MU46"/>
<dbReference type="PathwayCommons" id="A8MU46"/>
<dbReference type="SignaLink" id="A8MU46"/>
<dbReference type="BioGRID-ORCS" id="219537">
    <property type="hits" value="2 hits in 304 CRISPR screens"/>
</dbReference>
<dbReference type="GenomeRNAi" id="219537"/>
<dbReference type="Pharos" id="A8MU46">
    <property type="development level" value="Tbio"/>
</dbReference>
<dbReference type="PRO" id="PR:A8MU46"/>
<dbReference type="Proteomes" id="UP000005640">
    <property type="component" value="Chromosome 11"/>
</dbReference>
<dbReference type="RNAct" id="A8MU46">
    <property type="molecule type" value="protein"/>
</dbReference>
<dbReference type="Bgee" id="ENSG00000214872">
    <property type="expression patterns" value="Expressed in skeletal muscle tissue of rectus abdominis and 116 other cell types or tissues"/>
</dbReference>
<dbReference type="ExpressionAtlas" id="A8MU46">
    <property type="expression patterns" value="baseline and differential"/>
</dbReference>
<dbReference type="GO" id="GO:0043292">
    <property type="term" value="C:contractile muscle fiber"/>
    <property type="evidence" value="ECO:0000314"/>
    <property type="project" value="UniProtKB"/>
</dbReference>
<dbReference type="GO" id="GO:0005737">
    <property type="term" value="C:cytoplasm"/>
    <property type="evidence" value="ECO:0000250"/>
    <property type="project" value="UniProtKB"/>
</dbReference>
<dbReference type="GO" id="GO:0031674">
    <property type="term" value="C:I band"/>
    <property type="evidence" value="ECO:0007669"/>
    <property type="project" value="UniProtKB-SubCell"/>
</dbReference>
<dbReference type="GO" id="GO:0031430">
    <property type="term" value="C:M band"/>
    <property type="evidence" value="ECO:0007669"/>
    <property type="project" value="UniProtKB-SubCell"/>
</dbReference>
<dbReference type="GO" id="GO:0005634">
    <property type="term" value="C:nucleus"/>
    <property type="evidence" value="ECO:0000250"/>
    <property type="project" value="UniProtKB"/>
</dbReference>
<dbReference type="GO" id="GO:0005516">
    <property type="term" value="F:calmodulin binding"/>
    <property type="evidence" value="ECO:0007669"/>
    <property type="project" value="UniProtKB-KW"/>
</dbReference>
<dbReference type="GO" id="GO:0051401">
    <property type="term" value="F:CH domain binding"/>
    <property type="evidence" value="ECO:0007669"/>
    <property type="project" value="Ensembl"/>
</dbReference>
<dbReference type="GO" id="GO:0097718">
    <property type="term" value="F:disordered domain specific binding"/>
    <property type="evidence" value="ECO:0007669"/>
    <property type="project" value="Ensembl"/>
</dbReference>
<dbReference type="GO" id="GO:0008157">
    <property type="term" value="F:protein phosphatase 1 binding"/>
    <property type="evidence" value="ECO:0007669"/>
    <property type="project" value="Ensembl"/>
</dbReference>
<dbReference type="GO" id="GO:0005523">
    <property type="term" value="F:tropomyosin binding"/>
    <property type="evidence" value="ECO:0007669"/>
    <property type="project" value="Ensembl"/>
</dbReference>
<dbReference type="GO" id="GO:0048644">
    <property type="term" value="P:muscle organ morphogenesis"/>
    <property type="evidence" value="ECO:0007669"/>
    <property type="project" value="Ensembl"/>
</dbReference>
<dbReference type="GO" id="GO:0045892">
    <property type="term" value="P:negative regulation of DNA-templated transcription"/>
    <property type="evidence" value="ECO:0007669"/>
    <property type="project" value="Ensembl"/>
</dbReference>
<dbReference type="GO" id="GO:0045907">
    <property type="term" value="P:positive regulation of vasoconstriction"/>
    <property type="evidence" value="ECO:0000250"/>
    <property type="project" value="UniProtKB"/>
</dbReference>
<dbReference type="GO" id="GO:0014823">
    <property type="term" value="P:response to activity"/>
    <property type="evidence" value="ECO:0007669"/>
    <property type="project" value="Ensembl"/>
</dbReference>
<dbReference type="GO" id="GO:0009410">
    <property type="term" value="P:response to xenobiotic stimulus"/>
    <property type="evidence" value="ECO:0007669"/>
    <property type="project" value="Ensembl"/>
</dbReference>
<dbReference type="GO" id="GO:0042310">
    <property type="term" value="P:vasoconstriction"/>
    <property type="evidence" value="ECO:0007669"/>
    <property type="project" value="Ensembl"/>
</dbReference>
<dbReference type="CDD" id="cd21260">
    <property type="entry name" value="CH_SMTNL1"/>
    <property type="match status" value="1"/>
</dbReference>
<dbReference type="FunFam" id="1.10.418.10:FF:000009">
    <property type="entry name" value="smoothelin isoform X2"/>
    <property type="match status" value="1"/>
</dbReference>
<dbReference type="Gene3D" id="1.10.418.10">
    <property type="entry name" value="Calponin-like domain"/>
    <property type="match status" value="1"/>
</dbReference>
<dbReference type="InterPro" id="IPR001715">
    <property type="entry name" value="CH_dom"/>
</dbReference>
<dbReference type="InterPro" id="IPR036872">
    <property type="entry name" value="CH_dom_sf"/>
</dbReference>
<dbReference type="InterPro" id="IPR050540">
    <property type="entry name" value="F-actin_Monoox_Mical"/>
</dbReference>
<dbReference type="PANTHER" id="PTHR23167">
    <property type="entry name" value="CALPONIN HOMOLOGY DOMAIN-CONTAINING PROTEIN DDB_G0272472-RELATED"/>
    <property type="match status" value="1"/>
</dbReference>
<dbReference type="PANTHER" id="PTHR23167:SF45">
    <property type="entry name" value="SMOOTHELIN-LIKE PROTEIN 1"/>
    <property type="match status" value="1"/>
</dbReference>
<dbReference type="Pfam" id="PF00307">
    <property type="entry name" value="CH"/>
    <property type="match status" value="1"/>
</dbReference>
<dbReference type="SMART" id="SM00033">
    <property type="entry name" value="CH"/>
    <property type="match status" value="1"/>
</dbReference>
<dbReference type="SUPFAM" id="SSF47576">
    <property type="entry name" value="Calponin-homology domain, CH-domain"/>
    <property type="match status" value="1"/>
</dbReference>
<dbReference type="PROSITE" id="PS50021">
    <property type="entry name" value="CH"/>
    <property type="match status" value="1"/>
</dbReference>
<evidence type="ECO:0000250" key="1"/>
<evidence type="ECO:0000250" key="2">
    <source>
        <dbReference type="UniProtKB" id="Q99LM3"/>
    </source>
</evidence>
<evidence type="ECO:0000255" key="3"/>
<evidence type="ECO:0000255" key="4">
    <source>
        <dbReference type="PROSITE-ProRule" id="PRU00044"/>
    </source>
</evidence>
<evidence type="ECO:0000256" key="5">
    <source>
        <dbReference type="SAM" id="MobiDB-lite"/>
    </source>
</evidence>
<evidence type="ECO:0000269" key="6">
    <source>
    </source>
</evidence>
<evidence type="ECO:0000269" key="7">
    <source>
    </source>
</evidence>
<evidence type="ECO:0000305" key="8"/>
<comment type="function">
    <text evidence="1">Plays a role in the regulation of contractile properties of both striated and smooth muscles. When unphosphorylated, may inhibit myosin dephosphorylation. Phosphorylation at Ser-299 reduces this inhibitory activity (By similarity).</text>
</comment>
<comment type="subunit">
    <text evidence="1">Interacts with PPP1R12A.</text>
</comment>
<comment type="subcellular location">
    <subcellularLocation>
        <location evidence="6">Cytoplasm</location>
        <location evidence="6">Myofibril</location>
    </subcellularLocation>
    <subcellularLocation>
        <location evidence="1">Cytoplasm</location>
        <location evidence="1">Myofibril</location>
        <location evidence="1">Sarcomere</location>
        <location evidence="1">I band</location>
    </subcellularLocation>
    <subcellularLocation>
        <location evidence="1">Cytoplasm</location>
        <location evidence="1">Myofibril</location>
        <location evidence="1">Sarcomere</location>
        <location evidence="1">M line</location>
    </subcellularLocation>
    <subcellularLocation>
        <location evidence="1">Nucleus</location>
    </subcellularLocation>
    <text evidence="1">Colocalizes with MYH2. In its unphosphorylated state, localizes to the cytoplasm (By similarity). Phosphorylation at Ser-301 promotes translocation to the nucleus (By similarity).</text>
</comment>
<comment type="tissue specificity">
    <text evidence="6 7">Expressed in striated muscles, specifically in type 2a fibers (at protein level).</text>
</comment>
<comment type="PTM">
    <text evidence="1">Maximal phosphorylation of Ser-336 correlates with maximal relaxation of aorta in response to acetylcholine.</text>
</comment>
<comment type="similarity">
    <text evidence="8">Belongs to the smoothelin family.</text>
</comment>
<accession>A8MU46</accession>
<accession>E9PPJ3</accession>
<reference key="1">
    <citation type="journal article" date="2006" name="Nature">
        <title>Human chromosome 11 DNA sequence and analysis including novel gene identification.</title>
        <authorList>
            <person name="Taylor T.D."/>
            <person name="Noguchi H."/>
            <person name="Totoki Y."/>
            <person name="Toyoda A."/>
            <person name="Kuroki Y."/>
            <person name="Dewar K."/>
            <person name="Lloyd C."/>
            <person name="Itoh T."/>
            <person name="Takeda T."/>
            <person name="Kim D.-W."/>
            <person name="She X."/>
            <person name="Barlow K.F."/>
            <person name="Bloom T."/>
            <person name="Bruford E."/>
            <person name="Chang J.L."/>
            <person name="Cuomo C.A."/>
            <person name="Eichler E."/>
            <person name="FitzGerald M.G."/>
            <person name="Jaffe D.B."/>
            <person name="LaButti K."/>
            <person name="Nicol R."/>
            <person name="Park H.-S."/>
            <person name="Seaman C."/>
            <person name="Sougnez C."/>
            <person name="Yang X."/>
            <person name="Zimmer A.R."/>
            <person name="Zody M.C."/>
            <person name="Birren B.W."/>
            <person name="Nusbaum C."/>
            <person name="Fujiyama A."/>
            <person name="Hattori M."/>
            <person name="Rogers J."/>
            <person name="Lander E.S."/>
            <person name="Sakaki Y."/>
        </authorList>
    </citation>
    <scope>NUCLEOTIDE SEQUENCE [LARGE SCALE GENOMIC DNA]</scope>
</reference>
<reference key="2">
    <citation type="journal article" date="2008" name="J. Biol. Chem.">
        <title>Deletion of the protein kinase A/protein kinase G target SMTNL1 promotes an exercise-adapted phenotype in vascular smooth muscle.</title>
        <authorList>
            <person name="Wooldridge A.A."/>
            <person name="Fortner C.N."/>
            <person name="Lontay B."/>
            <person name="Akimoto T."/>
            <person name="Neppl R.L."/>
            <person name="Facemire C."/>
            <person name="Datto M.B."/>
            <person name="Kwon A."/>
            <person name="McCook E."/>
            <person name="Li P."/>
            <person name="Wang S."/>
            <person name="Thresher R.J."/>
            <person name="Miller S.E."/>
            <person name="Perriard J.C."/>
            <person name="Gavin T.P."/>
            <person name="Hickner R.C."/>
            <person name="Coffman T.M."/>
            <person name="Somlyo A.V."/>
            <person name="Yan Z."/>
            <person name="Haystead T.A."/>
        </authorList>
    </citation>
    <scope>SUBCELLULAR LOCATION</scope>
    <scope>TISSUE SPECIFICITY</scope>
</reference>
<reference key="3">
    <citation type="journal article" date="2010" name="J. Biol. Chem.">
        <title>Smoothelin-like 1 protein regulates myosin phosphatase-targeting subunit 1 expression during sexual development and pregnancy.</title>
        <authorList>
            <person name="Lontay B."/>
            <person name="Bodoor K."/>
            <person name="Weitzel D.H."/>
            <person name="Loiselle D."/>
            <person name="Fortner C."/>
            <person name="Lengyel S."/>
            <person name="Zheng D."/>
            <person name="Devente J."/>
            <person name="Hickner R."/>
            <person name="Haystead T.A."/>
        </authorList>
    </citation>
    <scope>TISSUE SPECIFICITY</scope>
</reference>
<name>SMTL1_HUMAN</name>
<proteinExistence type="evidence at protein level"/>
<gene>
    <name type="primary">SMTNL1</name>
</gene>